<name>RL17_NITHX</name>
<gene>
    <name evidence="1" type="primary">rplQ</name>
    <name type="ordered locus">Nham_1570</name>
</gene>
<proteinExistence type="inferred from homology"/>
<protein>
    <recommendedName>
        <fullName evidence="1">Large ribosomal subunit protein bL17</fullName>
    </recommendedName>
    <alternativeName>
        <fullName evidence="2">50S ribosomal protein L17</fullName>
    </alternativeName>
</protein>
<sequence>MRHGKVHRKLNRTAEHRKAMFANMAASLIKHEQIVTTLPKAKELRPIVEKLVTLGKKGGLDKRRQAISEMRDIDQVKKLFAVLAPRYKDRQGGYTRIIKAGFRYGDNAPMAVIEFVDRDVDAKGQDSGPVQEKATEAA</sequence>
<accession>Q1QN05</accession>
<reference key="1">
    <citation type="submission" date="2006-03" db="EMBL/GenBank/DDBJ databases">
        <title>Complete sequence of chromosome of Nitrobacter hamburgensis X14.</title>
        <authorList>
            <consortium name="US DOE Joint Genome Institute"/>
            <person name="Copeland A."/>
            <person name="Lucas S."/>
            <person name="Lapidus A."/>
            <person name="Barry K."/>
            <person name="Detter J.C."/>
            <person name="Glavina del Rio T."/>
            <person name="Hammon N."/>
            <person name="Israni S."/>
            <person name="Dalin E."/>
            <person name="Tice H."/>
            <person name="Pitluck S."/>
            <person name="Chain P."/>
            <person name="Malfatti S."/>
            <person name="Shin M."/>
            <person name="Vergez L."/>
            <person name="Schmutz J."/>
            <person name="Larimer F."/>
            <person name="Land M."/>
            <person name="Hauser L."/>
            <person name="Kyrpides N."/>
            <person name="Ivanova N."/>
            <person name="Ward B."/>
            <person name="Arp D."/>
            <person name="Klotz M."/>
            <person name="Stein L."/>
            <person name="O'Mullan G."/>
            <person name="Starkenburg S."/>
            <person name="Sayavedra L."/>
            <person name="Poret-Peterson A.T."/>
            <person name="Gentry M.E."/>
            <person name="Bruce D."/>
            <person name="Richardson P."/>
        </authorList>
    </citation>
    <scope>NUCLEOTIDE SEQUENCE [LARGE SCALE GENOMIC DNA]</scope>
    <source>
        <strain>DSM 10229 / NCIMB 13809 / X14</strain>
    </source>
</reference>
<dbReference type="EMBL" id="CP000319">
    <property type="protein sequence ID" value="ABE62392.1"/>
    <property type="molecule type" value="Genomic_DNA"/>
</dbReference>
<dbReference type="RefSeq" id="WP_011510078.1">
    <property type="nucleotide sequence ID" value="NC_007964.1"/>
</dbReference>
<dbReference type="SMR" id="Q1QN05"/>
<dbReference type="STRING" id="323097.Nham_1570"/>
<dbReference type="KEGG" id="nha:Nham_1570"/>
<dbReference type="eggNOG" id="COG0203">
    <property type="taxonomic scope" value="Bacteria"/>
</dbReference>
<dbReference type="HOGENOM" id="CLU_074407_2_0_5"/>
<dbReference type="OrthoDB" id="9809073at2"/>
<dbReference type="Proteomes" id="UP000001953">
    <property type="component" value="Chromosome"/>
</dbReference>
<dbReference type="GO" id="GO:0022625">
    <property type="term" value="C:cytosolic large ribosomal subunit"/>
    <property type="evidence" value="ECO:0007669"/>
    <property type="project" value="TreeGrafter"/>
</dbReference>
<dbReference type="GO" id="GO:0003735">
    <property type="term" value="F:structural constituent of ribosome"/>
    <property type="evidence" value="ECO:0007669"/>
    <property type="project" value="InterPro"/>
</dbReference>
<dbReference type="GO" id="GO:0006412">
    <property type="term" value="P:translation"/>
    <property type="evidence" value="ECO:0007669"/>
    <property type="project" value="UniProtKB-UniRule"/>
</dbReference>
<dbReference type="FunFam" id="3.90.1030.10:FF:000001">
    <property type="entry name" value="50S ribosomal protein L17"/>
    <property type="match status" value="1"/>
</dbReference>
<dbReference type="Gene3D" id="3.90.1030.10">
    <property type="entry name" value="Ribosomal protein L17"/>
    <property type="match status" value="1"/>
</dbReference>
<dbReference type="HAMAP" id="MF_01368">
    <property type="entry name" value="Ribosomal_bL17"/>
    <property type="match status" value="1"/>
</dbReference>
<dbReference type="InterPro" id="IPR000456">
    <property type="entry name" value="Ribosomal_bL17"/>
</dbReference>
<dbReference type="InterPro" id="IPR047859">
    <property type="entry name" value="Ribosomal_bL17_CS"/>
</dbReference>
<dbReference type="InterPro" id="IPR036373">
    <property type="entry name" value="Ribosomal_bL17_sf"/>
</dbReference>
<dbReference type="NCBIfam" id="TIGR00059">
    <property type="entry name" value="L17"/>
    <property type="match status" value="1"/>
</dbReference>
<dbReference type="PANTHER" id="PTHR14413:SF16">
    <property type="entry name" value="LARGE RIBOSOMAL SUBUNIT PROTEIN BL17M"/>
    <property type="match status" value="1"/>
</dbReference>
<dbReference type="PANTHER" id="PTHR14413">
    <property type="entry name" value="RIBOSOMAL PROTEIN L17"/>
    <property type="match status" value="1"/>
</dbReference>
<dbReference type="Pfam" id="PF01196">
    <property type="entry name" value="Ribosomal_L17"/>
    <property type="match status" value="1"/>
</dbReference>
<dbReference type="SUPFAM" id="SSF64263">
    <property type="entry name" value="Prokaryotic ribosomal protein L17"/>
    <property type="match status" value="1"/>
</dbReference>
<dbReference type="PROSITE" id="PS01167">
    <property type="entry name" value="RIBOSOMAL_L17"/>
    <property type="match status" value="1"/>
</dbReference>
<organism>
    <name type="scientific">Nitrobacter hamburgensis (strain DSM 10229 / NCIMB 13809 / X14)</name>
    <dbReference type="NCBI Taxonomy" id="323097"/>
    <lineage>
        <taxon>Bacteria</taxon>
        <taxon>Pseudomonadati</taxon>
        <taxon>Pseudomonadota</taxon>
        <taxon>Alphaproteobacteria</taxon>
        <taxon>Hyphomicrobiales</taxon>
        <taxon>Nitrobacteraceae</taxon>
        <taxon>Nitrobacter</taxon>
    </lineage>
</organism>
<comment type="subunit">
    <text evidence="1">Part of the 50S ribosomal subunit. Contacts protein L32.</text>
</comment>
<comment type="similarity">
    <text evidence="1">Belongs to the bacterial ribosomal protein bL17 family.</text>
</comment>
<feature type="chain" id="PRO_0000267900" description="Large ribosomal subunit protein bL17">
    <location>
        <begin position="1"/>
        <end position="138"/>
    </location>
</feature>
<keyword id="KW-1185">Reference proteome</keyword>
<keyword id="KW-0687">Ribonucleoprotein</keyword>
<keyword id="KW-0689">Ribosomal protein</keyword>
<evidence type="ECO:0000255" key="1">
    <source>
        <dbReference type="HAMAP-Rule" id="MF_01368"/>
    </source>
</evidence>
<evidence type="ECO:0000305" key="2"/>